<keyword id="KW-1185">Reference proteome</keyword>
<proteinExistence type="predicted"/>
<evidence type="ECO:0000305" key="1"/>
<organism>
    <name type="scientific">Escherichia coli O157:H7</name>
    <dbReference type="NCBI Taxonomy" id="83334"/>
    <lineage>
        <taxon>Bacteria</taxon>
        <taxon>Pseudomonadati</taxon>
        <taxon>Pseudomonadota</taxon>
        <taxon>Gammaproteobacteria</taxon>
        <taxon>Enterobacterales</taxon>
        <taxon>Enterobacteriaceae</taxon>
        <taxon>Escherichia</taxon>
    </lineage>
</organism>
<reference key="1">
    <citation type="journal article" date="2001" name="Nature">
        <title>Genome sequence of enterohaemorrhagic Escherichia coli O157:H7.</title>
        <authorList>
            <person name="Perna N.T."/>
            <person name="Plunkett G. III"/>
            <person name="Burland V."/>
            <person name="Mau B."/>
            <person name="Glasner J.D."/>
            <person name="Rose D.J."/>
            <person name="Mayhew G.F."/>
            <person name="Evans P.S."/>
            <person name="Gregor J."/>
            <person name="Kirkpatrick H.A."/>
            <person name="Posfai G."/>
            <person name="Hackett J."/>
            <person name="Klink S."/>
            <person name="Boutin A."/>
            <person name="Shao Y."/>
            <person name="Miller L."/>
            <person name="Grotbeck E.J."/>
            <person name="Davis N.W."/>
            <person name="Lim A."/>
            <person name="Dimalanta E.T."/>
            <person name="Potamousis K."/>
            <person name="Apodaca J."/>
            <person name="Anantharaman T.S."/>
            <person name="Lin J."/>
            <person name="Yen G."/>
            <person name="Schwartz D.C."/>
            <person name="Welch R.A."/>
            <person name="Blattner F.R."/>
        </authorList>
    </citation>
    <scope>NUCLEOTIDE SEQUENCE [LARGE SCALE GENOMIC DNA]</scope>
    <source>
        <strain>O157:H7 / EDL933 / ATCC 700927 / EHEC</strain>
    </source>
</reference>
<reference key="2">
    <citation type="journal article" date="2001" name="DNA Res.">
        <title>Complete genome sequence of enterohemorrhagic Escherichia coli O157:H7 and genomic comparison with a laboratory strain K-12.</title>
        <authorList>
            <person name="Hayashi T."/>
            <person name="Makino K."/>
            <person name="Ohnishi M."/>
            <person name="Kurokawa K."/>
            <person name="Ishii K."/>
            <person name="Yokoyama K."/>
            <person name="Han C.-G."/>
            <person name="Ohtsubo E."/>
            <person name="Nakayama K."/>
            <person name="Murata T."/>
            <person name="Tanaka M."/>
            <person name="Tobe T."/>
            <person name="Iida T."/>
            <person name="Takami H."/>
            <person name="Honda T."/>
            <person name="Sasakawa C."/>
            <person name="Ogasawara N."/>
            <person name="Yasunaga T."/>
            <person name="Kuhara S."/>
            <person name="Shiba T."/>
            <person name="Hattori M."/>
            <person name="Shinagawa H."/>
        </authorList>
    </citation>
    <scope>NUCLEOTIDE SEQUENCE [LARGE SCALE GENOMIC DNA]</scope>
    <source>
        <strain>O157:H7 / Sakai / RIMD 0509952 / EHEC</strain>
    </source>
</reference>
<name>YCEQ_ECO57</name>
<gene>
    <name type="primary">yceQ</name>
    <name type="ordered locus">Z1724</name>
    <name type="ordered locus">ECs1463</name>
</gene>
<dbReference type="EMBL" id="AE005174">
    <property type="protein sequence ID" value="AAG55831.1"/>
    <property type="status" value="ALT_INIT"/>
    <property type="molecule type" value="Genomic_DNA"/>
</dbReference>
<dbReference type="EMBL" id="BA000007">
    <property type="protein sequence ID" value="BAB34886.1"/>
    <property type="status" value="ALT_INIT"/>
    <property type="molecule type" value="Genomic_DNA"/>
</dbReference>
<dbReference type="PIR" id="C85671">
    <property type="entry name" value="C85671"/>
</dbReference>
<dbReference type="PIR" id="G90811">
    <property type="entry name" value="G90811"/>
</dbReference>
<dbReference type="RefSeq" id="NP_309490.2">
    <property type="nucleotide sequence ID" value="NC_002695.1"/>
</dbReference>
<dbReference type="STRING" id="155864.Z1724"/>
<dbReference type="KEGG" id="ece:Z1724"/>
<dbReference type="PATRIC" id="fig|83334.175.peg.1718"/>
<dbReference type="HOGENOM" id="CLU_163229_0_0_6"/>
<dbReference type="OMA" id="CXPCYSK"/>
<dbReference type="Proteomes" id="UP000000558">
    <property type="component" value="Chromosome"/>
</dbReference>
<dbReference type="Proteomes" id="UP000002519">
    <property type="component" value="Chromosome"/>
</dbReference>
<dbReference type="AntiFam" id="ANF00070">
    <property type="entry name" value="Spurious family"/>
</dbReference>
<accession>P62067</accession>
<accession>P75943</accession>
<protein>
    <recommendedName>
        <fullName>Uncharacterized protein YceQ</fullName>
    </recommendedName>
</protein>
<feature type="chain" id="PRO_0000168827" description="Uncharacterized protein YceQ">
    <location>
        <begin position="1"/>
        <end position="106"/>
    </location>
</feature>
<comment type="sequence caution" evidence="1">
    <conflict type="erroneous initiation">
        <sequence resource="EMBL-CDS" id="AAG55831"/>
    </conflict>
</comment>
<comment type="sequence caution" evidence="1">
    <conflict type="erroneous initiation">
        <sequence resource="EMBL-CDS" id="BAB34886"/>
    </conflict>
</comment>
<sequence length="106" mass="12100">MSVARFSCGKTAQLSKKQTGYYSPEIFPSTGKDCNPQPANCLKDQYVLRHCCVDDRSGKMGYSVKFLVLTRMDTETASLFHCKPCYSKMTFTIYHPLTHSFFTSCW</sequence>